<accession>A2QU77</accession>
<reference key="1">
    <citation type="journal article" date="2007" name="Nat. Biotechnol.">
        <title>Genome sequencing and analysis of the versatile cell factory Aspergillus niger CBS 513.88.</title>
        <authorList>
            <person name="Pel H.J."/>
            <person name="de Winde J.H."/>
            <person name="Archer D.B."/>
            <person name="Dyer P.S."/>
            <person name="Hofmann G."/>
            <person name="Schaap P.J."/>
            <person name="Turner G."/>
            <person name="de Vries R.P."/>
            <person name="Albang R."/>
            <person name="Albermann K."/>
            <person name="Andersen M.R."/>
            <person name="Bendtsen J.D."/>
            <person name="Benen J.A.E."/>
            <person name="van den Berg M."/>
            <person name="Breestraat S."/>
            <person name="Caddick M.X."/>
            <person name="Contreras R."/>
            <person name="Cornell M."/>
            <person name="Coutinho P.M."/>
            <person name="Danchin E.G.J."/>
            <person name="Debets A.J.M."/>
            <person name="Dekker P."/>
            <person name="van Dijck P.W.M."/>
            <person name="van Dijk A."/>
            <person name="Dijkhuizen L."/>
            <person name="Driessen A.J.M."/>
            <person name="d'Enfert C."/>
            <person name="Geysens S."/>
            <person name="Goosen C."/>
            <person name="Groot G.S.P."/>
            <person name="de Groot P.W.J."/>
            <person name="Guillemette T."/>
            <person name="Henrissat B."/>
            <person name="Herweijer M."/>
            <person name="van den Hombergh J.P.T.W."/>
            <person name="van den Hondel C.A.M.J.J."/>
            <person name="van der Heijden R.T.J.M."/>
            <person name="van der Kaaij R.M."/>
            <person name="Klis F.M."/>
            <person name="Kools H.J."/>
            <person name="Kubicek C.P."/>
            <person name="van Kuyk P.A."/>
            <person name="Lauber J."/>
            <person name="Lu X."/>
            <person name="van der Maarel M.J.E.C."/>
            <person name="Meulenberg R."/>
            <person name="Menke H."/>
            <person name="Mortimer M.A."/>
            <person name="Nielsen J."/>
            <person name="Oliver S.G."/>
            <person name="Olsthoorn M."/>
            <person name="Pal K."/>
            <person name="van Peij N.N.M.E."/>
            <person name="Ram A.F.J."/>
            <person name="Rinas U."/>
            <person name="Roubos J.A."/>
            <person name="Sagt C.M.J."/>
            <person name="Schmoll M."/>
            <person name="Sun J."/>
            <person name="Ussery D."/>
            <person name="Varga J."/>
            <person name="Vervecken W."/>
            <person name="van de Vondervoort P.J.J."/>
            <person name="Wedler H."/>
            <person name="Woesten H.A.B."/>
            <person name="Zeng A.-P."/>
            <person name="van Ooyen A.J.J."/>
            <person name="Visser J."/>
            <person name="Stam H."/>
        </authorList>
    </citation>
    <scope>NUCLEOTIDE SEQUENCE [LARGE SCALE GENOMIC DNA]</scope>
    <source>
        <strain>ATCC MYA-4892 / CBS 513.88 / FGSC A1513</strain>
    </source>
</reference>
<feature type="chain" id="PRO_0000312935" description="Serine/threonine-protein kinase ssn3">
    <location>
        <begin position="1"/>
        <end position="427"/>
    </location>
</feature>
<feature type="domain" description="Protein kinase" evidence="2">
    <location>
        <begin position="40"/>
        <end position="369"/>
    </location>
</feature>
<feature type="region of interest" description="Disordered" evidence="4">
    <location>
        <begin position="390"/>
        <end position="427"/>
    </location>
</feature>
<feature type="compositionally biased region" description="Basic and acidic residues" evidence="4">
    <location>
        <begin position="390"/>
        <end position="399"/>
    </location>
</feature>
<feature type="active site" description="Proton acceptor" evidence="2 3">
    <location>
        <position position="172"/>
    </location>
</feature>
<feature type="binding site" evidence="2">
    <location>
        <begin position="46"/>
        <end position="54"/>
    </location>
    <ligand>
        <name>ATP</name>
        <dbReference type="ChEBI" id="CHEBI:30616"/>
    </ligand>
</feature>
<feature type="binding site" evidence="2">
    <location>
        <position position="70"/>
    </location>
    <ligand>
        <name>ATP</name>
        <dbReference type="ChEBI" id="CHEBI:30616"/>
    </ligand>
</feature>
<evidence type="ECO:0000250" key="1"/>
<evidence type="ECO:0000255" key="2">
    <source>
        <dbReference type="PROSITE-ProRule" id="PRU00159"/>
    </source>
</evidence>
<evidence type="ECO:0000255" key="3">
    <source>
        <dbReference type="PROSITE-ProRule" id="PRU10027"/>
    </source>
</evidence>
<evidence type="ECO:0000256" key="4">
    <source>
        <dbReference type="SAM" id="MobiDB-lite"/>
    </source>
</evidence>
<evidence type="ECO:0000305" key="5"/>
<proteinExistence type="inferred from homology"/>
<sequence length="427" mass="48037">MFGRSFPFYNSLGGFYPQSLDARKPPGSGYTSKVRVRDRYHIVGFISSGTYGRVYKAIGKNGQKGEFAIKKFKPDKEGEIIQYTGLSQSAIREMALCSELDHPNVVQLAEIILEDKCIFMVFEYTEHDLLQIIHHHTQPQRHAIPALMVRSILFQLLNGLLYLHTNWVLHRDLKPANILVTSSGAIRIGDLGLARLFYKPLNSLFSGDKVVVTIWYRAPELLMGSRHYTPAVDLWAVGCIFAELLSLRPIFKGEEAKMDSKKTVPFQRNQMMKIIEIMGLPTKEIWPGIVSMPEYSQLQSLAMSRAPGHFNRSSNLEGWYQSCLKNNGYSANSSAGTPGADGFDLLSRLLEYDPTKRITAQEALEHPYFKNGGPISANCFEGFEGKYPHRRVTQDDNDIRSGSLPGTKRSGLPDDSLLGRATKRLKE</sequence>
<organism>
    <name type="scientific">Aspergillus niger (strain ATCC MYA-4892 / CBS 513.88 / FGSC A1513)</name>
    <dbReference type="NCBI Taxonomy" id="425011"/>
    <lineage>
        <taxon>Eukaryota</taxon>
        <taxon>Fungi</taxon>
        <taxon>Dikarya</taxon>
        <taxon>Ascomycota</taxon>
        <taxon>Pezizomycotina</taxon>
        <taxon>Eurotiomycetes</taxon>
        <taxon>Eurotiomycetidae</taxon>
        <taxon>Eurotiales</taxon>
        <taxon>Aspergillaceae</taxon>
        <taxon>Aspergillus</taxon>
        <taxon>Aspergillus subgen. Circumdati</taxon>
    </lineage>
</organism>
<dbReference type="EC" id="2.7.11.22"/>
<dbReference type="EC" id="2.7.11.23"/>
<dbReference type="EMBL" id="AM270202">
    <property type="protein sequence ID" value="CAK40320.1"/>
    <property type="status" value="ALT_INIT"/>
    <property type="molecule type" value="Genomic_DNA"/>
</dbReference>
<dbReference type="SMR" id="A2QU77"/>
<dbReference type="EnsemblFungi" id="CAK40320">
    <property type="protein sequence ID" value="CAK40320"/>
    <property type="gene ID" value="An09g04660"/>
</dbReference>
<dbReference type="Proteomes" id="UP000006706">
    <property type="component" value="Chromosome 1L"/>
</dbReference>
<dbReference type="GO" id="GO:1990508">
    <property type="term" value="C:CKM complex"/>
    <property type="evidence" value="ECO:0007669"/>
    <property type="project" value="EnsemblFungi"/>
</dbReference>
<dbReference type="GO" id="GO:0016592">
    <property type="term" value="C:mediator complex"/>
    <property type="evidence" value="ECO:0007669"/>
    <property type="project" value="EnsemblFungi"/>
</dbReference>
<dbReference type="GO" id="GO:0005524">
    <property type="term" value="F:ATP binding"/>
    <property type="evidence" value="ECO:0007669"/>
    <property type="project" value="UniProtKB-KW"/>
</dbReference>
<dbReference type="GO" id="GO:0004693">
    <property type="term" value="F:cyclin-dependent protein serine/threonine kinase activity"/>
    <property type="evidence" value="ECO:0007669"/>
    <property type="project" value="UniProtKB-EC"/>
</dbReference>
<dbReference type="GO" id="GO:0046872">
    <property type="term" value="F:metal ion binding"/>
    <property type="evidence" value="ECO:0007669"/>
    <property type="project" value="UniProtKB-KW"/>
</dbReference>
<dbReference type="GO" id="GO:0106310">
    <property type="term" value="F:protein serine kinase activity"/>
    <property type="evidence" value="ECO:0007669"/>
    <property type="project" value="RHEA"/>
</dbReference>
<dbReference type="GO" id="GO:0008353">
    <property type="term" value="F:RNA polymerase II CTD heptapeptide repeat kinase activity"/>
    <property type="evidence" value="ECO:0007669"/>
    <property type="project" value="UniProtKB-EC"/>
</dbReference>
<dbReference type="GO" id="GO:0060258">
    <property type="term" value="P:negative regulation of filamentous growth"/>
    <property type="evidence" value="ECO:0007669"/>
    <property type="project" value="EnsemblFungi"/>
</dbReference>
<dbReference type="GO" id="GO:0000122">
    <property type="term" value="P:negative regulation of transcription by RNA polymerase II"/>
    <property type="evidence" value="ECO:0007669"/>
    <property type="project" value="EnsemblFungi"/>
</dbReference>
<dbReference type="GO" id="GO:0070481">
    <property type="term" value="P:nuclear-transcribed mRNA catabolic process, non-stop decay"/>
    <property type="evidence" value="ECO:0007669"/>
    <property type="project" value="EnsemblFungi"/>
</dbReference>
<dbReference type="GO" id="GO:0045944">
    <property type="term" value="P:positive regulation of transcription by RNA polymerase II"/>
    <property type="evidence" value="ECO:0007669"/>
    <property type="project" value="EnsemblFungi"/>
</dbReference>
<dbReference type="GO" id="GO:0031648">
    <property type="term" value="P:protein destabilization"/>
    <property type="evidence" value="ECO:0007669"/>
    <property type="project" value="EnsemblFungi"/>
</dbReference>
<dbReference type="CDD" id="cd07842">
    <property type="entry name" value="STKc_CDK8_like"/>
    <property type="match status" value="1"/>
</dbReference>
<dbReference type="FunFam" id="1.10.510.10:FF:000408">
    <property type="entry name" value="Serine/threonine-protein kinase SSN3"/>
    <property type="match status" value="1"/>
</dbReference>
<dbReference type="FunFam" id="3.30.200.20:FF:000426">
    <property type="entry name" value="Serine/threonine-protein kinase ssn3"/>
    <property type="match status" value="1"/>
</dbReference>
<dbReference type="Gene3D" id="3.30.200.20">
    <property type="entry name" value="Phosphorylase Kinase, domain 1"/>
    <property type="match status" value="1"/>
</dbReference>
<dbReference type="Gene3D" id="1.10.510.10">
    <property type="entry name" value="Transferase(Phosphotransferase) domain 1"/>
    <property type="match status" value="1"/>
</dbReference>
<dbReference type="InterPro" id="IPR050108">
    <property type="entry name" value="CDK"/>
</dbReference>
<dbReference type="InterPro" id="IPR011009">
    <property type="entry name" value="Kinase-like_dom_sf"/>
</dbReference>
<dbReference type="InterPro" id="IPR000719">
    <property type="entry name" value="Prot_kinase_dom"/>
</dbReference>
<dbReference type="InterPro" id="IPR008271">
    <property type="entry name" value="Ser/Thr_kinase_AS"/>
</dbReference>
<dbReference type="PANTHER" id="PTHR24056">
    <property type="entry name" value="CELL DIVISION PROTEIN KINASE"/>
    <property type="match status" value="1"/>
</dbReference>
<dbReference type="PANTHER" id="PTHR24056:SF495">
    <property type="entry name" value="CYCLIN-DEPENDENT KINASE 8-RELATED"/>
    <property type="match status" value="1"/>
</dbReference>
<dbReference type="Pfam" id="PF00069">
    <property type="entry name" value="Pkinase"/>
    <property type="match status" value="1"/>
</dbReference>
<dbReference type="SMART" id="SM00220">
    <property type="entry name" value="S_TKc"/>
    <property type="match status" value="1"/>
</dbReference>
<dbReference type="SUPFAM" id="SSF56112">
    <property type="entry name" value="Protein kinase-like (PK-like)"/>
    <property type="match status" value="1"/>
</dbReference>
<dbReference type="PROSITE" id="PS50011">
    <property type="entry name" value="PROTEIN_KINASE_DOM"/>
    <property type="match status" value="1"/>
</dbReference>
<dbReference type="PROSITE" id="PS00108">
    <property type="entry name" value="PROTEIN_KINASE_ST"/>
    <property type="match status" value="1"/>
</dbReference>
<comment type="function">
    <text evidence="1">Component of the srb8-11 complex. The srb8-11 complex is a regulatory module of the Mediator complex which is itself involved in regulation of basal and activated RNA polymerase II-dependent transcription. The srb8-11 complex may be involved in the transcriptional repression of a subset of genes regulated by Mediator. It may inhibit the association of the Mediator complex with RNA polymerase II to form the holoenzyme complex. The srb8-11 complex phosphorylates the C-terminal domain (CTD) of the largest subunit of RNA polymerase II (By similarity).</text>
</comment>
<comment type="catalytic activity">
    <reaction>
        <text>L-seryl-[protein] + ATP = O-phospho-L-seryl-[protein] + ADP + H(+)</text>
        <dbReference type="Rhea" id="RHEA:17989"/>
        <dbReference type="Rhea" id="RHEA-COMP:9863"/>
        <dbReference type="Rhea" id="RHEA-COMP:11604"/>
        <dbReference type="ChEBI" id="CHEBI:15378"/>
        <dbReference type="ChEBI" id="CHEBI:29999"/>
        <dbReference type="ChEBI" id="CHEBI:30616"/>
        <dbReference type="ChEBI" id="CHEBI:83421"/>
        <dbReference type="ChEBI" id="CHEBI:456216"/>
        <dbReference type="EC" id="2.7.11.22"/>
    </reaction>
</comment>
<comment type="catalytic activity">
    <reaction>
        <text>L-threonyl-[protein] + ATP = O-phospho-L-threonyl-[protein] + ADP + H(+)</text>
        <dbReference type="Rhea" id="RHEA:46608"/>
        <dbReference type="Rhea" id="RHEA-COMP:11060"/>
        <dbReference type="Rhea" id="RHEA-COMP:11605"/>
        <dbReference type="ChEBI" id="CHEBI:15378"/>
        <dbReference type="ChEBI" id="CHEBI:30013"/>
        <dbReference type="ChEBI" id="CHEBI:30616"/>
        <dbReference type="ChEBI" id="CHEBI:61977"/>
        <dbReference type="ChEBI" id="CHEBI:456216"/>
        <dbReference type="EC" id="2.7.11.22"/>
    </reaction>
</comment>
<comment type="catalytic activity">
    <reaction>
        <text>[DNA-directed RNA polymerase] + ATP = phospho-[DNA-directed RNA polymerase] + ADP + H(+)</text>
        <dbReference type="Rhea" id="RHEA:10216"/>
        <dbReference type="Rhea" id="RHEA-COMP:11321"/>
        <dbReference type="Rhea" id="RHEA-COMP:11322"/>
        <dbReference type="ChEBI" id="CHEBI:15378"/>
        <dbReference type="ChEBI" id="CHEBI:30616"/>
        <dbReference type="ChEBI" id="CHEBI:43176"/>
        <dbReference type="ChEBI" id="CHEBI:68546"/>
        <dbReference type="ChEBI" id="CHEBI:456216"/>
        <dbReference type="EC" id="2.7.11.23"/>
    </reaction>
</comment>
<comment type="cofactor">
    <cofactor evidence="1">
        <name>Mg(2+)</name>
        <dbReference type="ChEBI" id="CHEBI:18420"/>
    </cofactor>
</comment>
<comment type="subunit">
    <text evidence="1">Component of the srb8-11 complex, a regulatory module of the Mediator complex.</text>
</comment>
<comment type="subcellular location">
    <subcellularLocation>
        <location evidence="5">Nucleus</location>
    </subcellularLocation>
</comment>
<comment type="similarity">
    <text evidence="5">Belongs to the protein kinase superfamily. CMGC Ser/Thr protein kinase family. CDC2/CDKX subfamily.</text>
</comment>
<comment type="sequence caution" evidence="5">
    <conflict type="erroneous initiation">
        <sequence resource="EMBL-CDS" id="CAK40320"/>
    </conflict>
</comment>
<protein>
    <recommendedName>
        <fullName>Serine/threonine-protein kinase ssn3</fullName>
        <ecNumber>2.7.11.22</ecNumber>
        <ecNumber>2.7.11.23</ecNumber>
    </recommendedName>
    <alternativeName>
        <fullName>Cyclin-dependent kinase 8</fullName>
    </alternativeName>
</protein>
<keyword id="KW-0010">Activator</keyword>
<keyword id="KW-0067">ATP-binding</keyword>
<keyword id="KW-0418">Kinase</keyword>
<keyword id="KW-0460">Magnesium</keyword>
<keyword id="KW-0479">Metal-binding</keyword>
<keyword id="KW-0547">Nucleotide-binding</keyword>
<keyword id="KW-0539">Nucleus</keyword>
<keyword id="KW-1185">Reference proteome</keyword>
<keyword id="KW-0678">Repressor</keyword>
<keyword id="KW-0723">Serine/threonine-protein kinase</keyword>
<keyword id="KW-0804">Transcription</keyword>
<keyword id="KW-0805">Transcription regulation</keyword>
<keyword id="KW-0808">Transferase</keyword>
<gene>
    <name type="primary">ssn3</name>
    <name type="synonym">cdk8</name>
    <name type="ORF">An09g04660</name>
</gene>
<name>SSN3_ASPNC</name>